<feature type="chain" id="PRO_0000272335" description="ATP-dependent zinc metalloprotease FtsH">
    <location>
        <begin position="1"/>
        <end position="638"/>
    </location>
</feature>
<feature type="topological domain" description="Cytoplasmic" evidence="1">
    <location>
        <begin position="1"/>
        <end position="4"/>
    </location>
</feature>
<feature type="transmembrane region" description="Helical" evidence="1">
    <location>
        <begin position="5"/>
        <end position="25"/>
    </location>
</feature>
<feature type="topological domain" description="Periplasmic" evidence="1">
    <location>
        <begin position="26"/>
        <end position="103"/>
    </location>
</feature>
<feature type="transmembrane region" description="Helical" evidence="1">
    <location>
        <begin position="104"/>
        <end position="124"/>
    </location>
</feature>
<feature type="topological domain" description="Cytoplasmic" evidence="1">
    <location>
        <begin position="125"/>
        <end position="638"/>
    </location>
</feature>
<feature type="region of interest" description="Disordered" evidence="2">
    <location>
        <begin position="523"/>
        <end position="544"/>
    </location>
</feature>
<feature type="active site" evidence="1">
    <location>
        <position position="418"/>
    </location>
</feature>
<feature type="binding site" evidence="1">
    <location>
        <begin position="195"/>
        <end position="202"/>
    </location>
    <ligand>
        <name>ATP</name>
        <dbReference type="ChEBI" id="CHEBI:30616"/>
    </ligand>
</feature>
<feature type="binding site" evidence="1">
    <location>
        <position position="417"/>
    </location>
    <ligand>
        <name>Zn(2+)</name>
        <dbReference type="ChEBI" id="CHEBI:29105"/>
        <note>catalytic</note>
    </ligand>
</feature>
<feature type="binding site" evidence="1">
    <location>
        <position position="421"/>
    </location>
    <ligand>
        <name>Zn(2+)</name>
        <dbReference type="ChEBI" id="CHEBI:29105"/>
        <note>catalytic</note>
    </ligand>
</feature>
<feature type="binding site" evidence="1">
    <location>
        <position position="495"/>
    </location>
    <ligand>
        <name>Zn(2+)</name>
        <dbReference type="ChEBI" id="CHEBI:29105"/>
        <note>catalytic</note>
    </ligand>
</feature>
<dbReference type="EC" id="3.4.24.-" evidence="1"/>
<dbReference type="EMBL" id="CP000087">
    <property type="protein sequence ID" value="ABE05474.1"/>
    <property type="molecule type" value="Genomic_DNA"/>
</dbReference>
<dbReference type="RefSeq" id="WP_011478043.1">
    <property type="nucleotide sequence ID" value="NC_007940.1"/>
</dbReference>
<dbReference type="SMR" id="Q1RGP0"/>
<dbReference type="KEGG" id="rbe:RBE_1393"/>
<dbReference type="eggNOG" id="COG0465">
    <property type="taxonomic scope" value="Bacteria"/>
</dbReference>
<dbReference type="HOGENOM" id="CLU_000688_16_2_5"/>
<dbReference type="OrthoDB" id="9809379at2"/>
<dbReference type="Proteomes" id="UP000001951">
    <property type="component" value="Chromosome"/>
</dbReference>
<dbReference type="GO" id="GO:0005886">
    <property type="term" value="C:plasma membrane"/>
    <property type="evidence" value="ECO:0007669"/>
    <property type="project" value="UniProtKB-SubCell"/>
</dbReference>
<dbReference type="GO" id="GO:0005524">
    <property type="term" value="F:ATP binding"/>
    <property type="evidence" value="ECO:0007669"/>
    <property type="project" value="UniProtKB-UniRule"/>
</dbReference>
<dbReference type="GO" id="GO:0016887">
    <property type="term" value="F:ATP hydrolysis activity"/>
    <property type="evidence" value="ECO:0007669"/>
    <property type="project" value="UniProtKB-UniRule"/>
</dbReference>
<dbReference type="GO" id="GO:0004176">
    <property type="term" value="F:ATP-dependent peptidase activity"/>
    <property type="evidence" value="ECO:0007669"/>
    <property type="project" value="InterPro"/>
</dbReference>
<dbReference type="GO" id="GO:0004222">
    <property type="term" value="F:metalloendopeptidase activity"/>
    <property type="evidence" value="ECO:0007669"/>
    <property type="project" value="InterPro"/>
</dbReference>
<dbReference type="GO" id="GO:0008270">
    <property type="term" value="F:zinc ion binding"/>
    <property type="evidence" value="ECO:0007669"/>
    <property type="project" value="UniProtKB-UniRule"/>
</dbReference>
<dbReference type="GO" id="GO:0030163">
    <property type="term" value="P:protein catabolic process"/>
    <property type="evidence" value="ECO:0007669"/>
    <property type="project" value="UniProtKB-UniRule"/>
</dbReference>
<dbReference type="GO" id="GO:0006508">
    <property type="term" value="P:proteolysis"/>
    <property type="evidence" value="ECO:0007669"/>
    <property type="project" value="UniProtKB-KW"/>
</dbReference>
<dbReference type="CDD" id="cd19501">
    <property type="entry name" value="RecA-like_FtsH"/>
    <property type="match status" value="1"/>
</dbReference>
<dbReference type="FunFam" id="1.10.8.60:FF:000001">
    <property type="entry name" value="ATP-dependent zinc metalloprotease FtsH"/>
    <property type="match status" value="1"/>
</dbReference>
<dbReference type="FunFam" id="1.20.58.760:FF:000002">
    <property type="entry name" value="ATP-dependent zinc metalloprotease FtsH"/>
    <property type="match status" value="1"/>
</dbReference>
<dbReference type="FunFam" id="3.40.50.300:FF:000001">
    <property type="entry name" value="ATP-dependent zinc metalloprotease FtsH"/>
    <property type="match status" value="1"/>
</dbReference>
<dbReference type="Gene3D" id="1.10.8.60">
    <property type="match status" value="1"/>
</dbReference>
<dbReference type="Gene3D" id="3.30.720.210">
    <property type="match status" value="1"/>
</dbReference>
<dbReference type="Gene3D" id="3.40.50.300">
    <property type="entry name" value="P-loop containing nucleotide triphosphate hydrolases"/>
    <property type="match status" value="1"/>
</dbReference>
<dbReference type="Gene3D" id="1.20.58.760">
    <property type="entry name" value="Peptidase M41"/>
    <property type="match status" value="1"/>
</dbReference>
<dbReference type="HAMAP" id="MF_01458">
    <property type="entry name" value="FtsH"/>
    <property type="match status" value="1"/>
</dbReference>
<dbReference type="InterPro" id="IPR003593">
    <property type="entry name" value="AAA+_ATPase"/>
</dbReference>
<dbReference type="InterPro" id="IPR041569">
    <property type="entry name" value="AAA_lid_3"/>
</dbReference>
<dbReference type="InterPro" id="IPR003959">
    <property type="entry name" value="ATPase_AAA_core"/>
</dbReference>
<dbReference type="InterPro" id="IPR003960">
    <property type="entry name" value="ATPase_AAA_CS"/>
</dbReference>
<dbReference type="InterPro" id="IPR005936">
    <property type="entry name" value="FtsH"/>
</dbReference>
<dbReference type="InterPro" id="IPR027417">
    <property type="entry name" value="P-loop_NTPase"/>
</dbReference>
<dbReference type="InterPro" id="IPR011546">
    <property type="entry name" value="Pept_M41_FtsH_extracell"/>
</dbReference>
<dbReference type="InterPro" id="IPR000642">
    <property type="entry name" value="Peptidase_M41"/>
</dbReference>
<dbReference type="InterPro" id="IPR037219">
    <property type="entry name" value="Peptidase_M41-like"/>
</dbReference>
<dbReference type="NCBIfam" id="TIGR01241">
    <property type="entry name" value="FtsH_fam"/>
    <property type="match status" value="1"/>
</dbReference>
<dbReference type="PANTHER" id="PTHR23076:SF97">
    <property type="entry name" value="ATP-DEPENDENT ZINC METALLOPROTEASE YME1L1"/>
    <property type="match status" value="1"/>
</dbReference>
<dbReference type="PANTHER" id="PTHR23076">
    <property type="entry name" value="METALLOPROTEASE M41 FTSH"/>
    <property type="match status" value="1"/>
</dbReference>
<dbReference type="Pfam" id="PF00004">
    <property type="entry name" value="AAA"/>
    <property type="match status" value="1"/>
</dbReference>
<dbReference type="Pfam" id="PF17862">
    <property type="entry name" value="AAA_lid_3"/>
    <property type="match status" value="1"/>
</dbReference>
<dbReference type="Pfam" id="PF06480">
    <property type="entry name" value="FtsH_ext"/>
    <property type="match status" value="1"/>
</dbReference>
<dbReference type="Pfam" id="PF01434">
    <property type="entry name" value="Peptidase_M41"/>
    <property type="match status" value="1"/>
</dbReference>
<dbReference type="SMART" id="SM00382">
    <property type="entry name" value="AAA"/>
    <property type="match status" value="1"/>
</dbReference>
<dbReference type="SUPFAM" id="SSF140990">
    <property type="entry name" value="FtsH protease domain-like"/>
    <property type="match status" value="1"/>
</dbReference>
<dbReference type="SUPFAM" id="SSF52540">
    <property type="entry name" value="P-loop containing nucleoside triphosphate hydrolases"/>
    <property type="match status" value="1"/>
</dbReference>
<dbReference type="PROSITE" id="PS00674">
    <property type="entry name" value="AAA"/>
    <property type="match status" value="1"/>
</dbReference>
<organism>
    <name type="scientific">Rickettsia bellii (strain RML369-C)</name>
    <dbReference type="NCBI Taxonomy" id="336407"/>
    <lineage>
        <taxon>Bacteria</taxon>
        <taxon>Pseudomonadati</taxon>
        <taxon>Pseudomonadota</taxon>
        <taxon>Alphaproteobacteria</taxon>
        <taxon>Rickettsiales</taxon>
        <taxon>Rickettsiaceae</taxon>
        <taxon>Rickettsieae</taxon>
        <taxon>Rickettsia</taxon>
        <taxon>belli group</taxon>
    </lineage>
</organism>
<protein>
    <recommendedName>
        <fullName evidence="1">ATP-dependent zinc metalloprotease FtsH</fullName>
        <ecNumber evidence="1">3.4.24.-</ecNumber>
    </recommendedName>
</protein>
<evidence type="ECO:0000255" key="1">
    <source>
        <dbReference type="HAMAP-Rule" id="MF_01458"/>
    </source>
</evidence>
<evidence type="ECO:0000256" key="2">
    <source>
        <dbReference type="SAM" id="MobiDB-lite"/>
    </source>
</evidence>
<reference key="1">
    <citation type="journal article" date="2006" name="PLoS Genet.">
        <title>Genome sequence of Rickettsia bellii illuminates the role of amoebae in gene exchanges between intracellular pathogens.</title>
        <authorList>
            <person name="Ogata H."/>
            <person name="La Scola B."/>
            <person name="Audic S."/>
            <person name="Renesto P."/>
            <person name="Blanc G."/>
            <person name="Robert C."/>
            <person name="Fournier P.-E."/>
            <person name="Claverie J.-M."/>
            <person name="Raoult D."/>
        </authorList>
    </citation>
    <scope>NUCLEOTIDE SEQUENCE [LARGE SCALE GENOMIC DNA]</scope>
    <source>
        <strain>RML369-C</strain>
    </source>
</reference>
<gene>
    <name evidence="1" type="primary">ftsH</name>
    <name type="ordered locus">RBE_1393</name>
</gene>
<accession>Q1RGP0</accession>
<comment type="function">
    <text evidence="1">Acts as a processive, ATP-dependent zinc metallopeptidase for both cytoplasmic and membrane proteins. Plays a role in the quality control of integral membrane proteins.</text>
</comment>
<comment type="cofactor">
    <cofactor evidence="1">
        <name>Zn(2+)</name>
        <dbReference type="ChEBI" id="CHEBI:29105"/>
    </cofactor>
    <text evidence="1">Binds 1 zinc ion per subunit.</text>
</comment>
<comment type="subunit">
    <text evidence="1">Homohexamer.</text>
</comment>
<comment type="subcellular location">
    <subcellularLocation>
        <location evidence="1">Cell inner membrane</location>
        <topology evidence="1">Multi-pass membrane protein</topology>
        <orientation evidence="1">Cytoplasmic side</orientation>
    </subcellularLocation>
</comment>
<comment type="similarity">
    <text evidence="1">In the central section; belongs to the AAA ATPase family.</text>
</comment>
<comment type="similarity">
    <text evidence="1">In the C-terminal section; belongs to the peptidase M41 family.</text>
</comment>
<sequence>MNNQGKNIIVWAVIFVFVILLFNVFQSDGLLSSKNNISFSEFLTKVDEKTVNSVKIQGRIIEGTSNDGSSFSTYAPDYPDLVNRLNNNDVNIEVVPPETRMNTFLSFLISWFPMLLLIGVWVFFMRQMHGGGKAMGFGKSKAKLLSDKGPKITFKDVAGIDEAKDELTEIVDFLRDPSKFQKLGGKIPKGCLLIGPPGTGKTLLAKAIAGEANVPFFSISGSDFVEMFVGVGASRVRDMFEQGKRNAPCIIFIDEIDAVGRHRGIGMGGGNDEREQTLNQMLVEMDGFEANEGVVIIAATNRPDVLDNALLRPGRFDRQITVSNPDIDGREKILQVHLKKVKYSTKIVPRIIARGTPGFSGAELANLVNEATLIAARRNKKEVEMHDLEEAKDKVMMGVERRSMIMSDEQKKLTAYHEGGHALVGLYCLASDPIHKATIIPRGRALGMVMRLPENDRFSMPRDKMEADIAVAMAGRVAEEIIFGKEKVTSGASSDIKMATRMAKAMVTDWGLSDKVGPVYHGSASEDMYTNRNSSSDRSESTSELIDEEVKKIVTTGYDLAKDILTKHLDQLHILAKALIEYETLSGQQIKNLLSSRQLDSEEENNFPFGAASSTIKIAEEKDLKKAKPIKAKKEDKS</sequence>
<keyword id="KW-0067">ATP-binding</keyword>
<keyword id="KW-0997">Cell inner membrane</keyword>
<keyword id="KW-1003">Cell membrane</keyword>
<keyword id="KW-0378">Hydrolase</keyword>
<keyword id="KW-0472">Membrane</keyword>
<keyword id="KW-0479">Metal-binding</keyword>
<keyword id="KW-0482">Metalloprotease</keyword>
<keyword id="KW-0547">Nucleotide-binding</keyword>
<keyword id="KW-0645">Protease</keyword>
<keyword id="KW-0812">Transmembrane</keyword>
<keyword id="KW-1133">Transmembrane helix</keyword>
<keyword id="KW-0862">Zinc</keyword>
<name>FTSH_RICBR</name>
<proteinExistence type="inferred from homology"/>